<proteinExistence type="inferred from homology"/>
<sequence>MSATEPTKEPAKEEVAEQSTVAQAQVDGSGEPANGSPLTETEYKVEVKLADMQADPNNPLYSAQSFEELQLSEELLKGVRNMNFRKPSKIQEKALPLLLMNPPTNMIAQSQSGTGKTAAFSLNILSRIDLSRNEPQAIALAPSRELARQILGVITHMGQFMEGLKTMAAIPDPTKRNQRLDAHVLVGTPGTVQEQLKRRLIKSDSIKILVLDEADNMLDQQGMGDQCTRVKSLLPKNIQTVLFSATFPPAVINYANKFAPNSNVLTLAHEELTIEGIKQLYIDIDKDQDKYSTLLKFYGLMTQASSIIFVRTRRTAEELERRMVAEGHKVAQLSGALEGQDRDRVIDQFRSGEAKVLITTNVLARGIDVESVTMVINYDVPTMADGREADPETYLHRIGRTGRFGRVGVALTFVHDKASWQQLHDIASYFKTDLHPIDTSDWDNVEEMIQKIIKSSRAGKSTKEMTEMITS</sequence>
<keyword id="KW-0067">ATP-binding</keyword>
<keyword id="KW-0963">Cytoplasm</keyword>
<keyword id="KW-0347">Helicase</keyword>
<keyword id="KW-0378">Hydrolase</keyword>
<keyword id="KW-0472">Membrane</keyword>
<keyword id="KW-0509">mRNA transport</keyword>
<keyword id="KW-0906">Nuclear pore complex</keyword>
<keyword id="KW-0547">Nucleotide-binding</keyword>
<keyword id="KW-0539">Nucleus</keyword>
<keyword id="KW-0653">Protein transport</keyword>
<keyword id="KW-0694">RNA-binding</keyword>
<keyword id="KW-0811">Translocation</keyword>
<keyword id="KW-0813">Transport</keyword>
<gene>
    <name type="primary">DBP5</name>
    <name type="ORF">SNOG_10595</name>
</gene>
<organism>
    <name type="scientific">Phaeosphaeria nodorum (strain SN15 / ATCC MYA-4574 / FGSC 10173)</name>
    <name type="common">Glume blotch fungus</name>
    <name type="synonym">Parastagonospora nodorum</name>
    <dbReference type="NCBI Taxonomy" id="321614"/>
    <lineage>
        <taxon>Eukaryota</taxon>
        <taxon>Fungi</taxon>
        <taxon>Dikarya</taxon>
        <taxon>Ascomycota</taxon>
        <taxon>Pezizomycotina</taxon>
        <taxon>Dothideomycetes</taxon>
        <taxon>Pleosporomycetidae</taxon>
        <taxon>Pleosporales</taxon>
        <taxon>Pleosporineae</taxon>
        <taxon>Phaeosphaeriaceae</taxon>
        <taxon>Parastagonospora</taxon>
    </lineage>
</organism>
<evidence type="ECO:0000250" key="1"/>
<evidence type="ECO:0000255" key="2">
    <source>
        <dbReference type="PROSITE-ProRule" id="PRU00541"/>
    </source>
</evidence>
<evidence type="ECO:0000255" key="3">
    <source>
        <dbReference type="PROSITE-ProRule" id="PRU00542"/>
    </source>
</evidence>
<evidence type="ECO:0000256" key="4">
    <source>
        <dbReference type="SAM" id="MobiDB-lite"/>
    </source>
</evidence>
<evidence type="ECO:0000305" key="5"/>
<comment type="function">
    <text evidence="1">ATP-dependent RNA helicase associated with the nuclear pore complex and essential for mRNA export from the nucleus. May participate in a terminal step of mRNA export through the removal of proteins that accompany mRNA through the nucleopore complex. May also be involved in early transcription (By similarity).</text>
</comment>
<comment type="catalytic activity">
    <reaction>
        <text>ATP + H2O = ADP + phosphate + H(+)</text>
        <dbReference type="Rhea" id="RHEA:13065"/>
        <dbReference type="ChEBI" id="CHEBI:15377"/>
        <dbReference type="ChEBI" id="CHEBI:15378"/>
        <dbReference type="ChEBI" id="CHEBI:30616"/>
        <dbReference type="ChEBI" id="CHEBI:43474"/>
        <dbReference type="ChEBI" id="CHEBI:456216"/>
        <dbReference type="EC" id="3.6.4.13"/>
    </reaction>
</comment>
<comment type="subunit">
    <text evidence="1">Associates with the nuclear pore complex.</text>
</comment>
<comment type="subcellular location">
    <subcellularLocation>
        <location evidence="1">Cytoplasm</location>
    </subcellularLocation>
    <subcellularLocation>
        <location>Nucleus</location>
        <location>Nuclear pore complex</location>
    </subcellularLocation>
    <subcellularLocation>
        <location evidence="1">Nucleus membrane</location>
        <topology evidence="1">Peripheral membrane protein</topology>
        <orientation evidence="1">Cytoplasmic side</orientation>
    </subcellularLocation>
    <text evidence="1">Nuclear pore complex cytoplasmic fibrils.</text>
</comment>
<comment type="domain">
    <text>The Q motif is unique to and characteristic of the DEAD box family of RNA helicases and controls ATP binding and hydrolysis.</text>
</comment>
<comment type="similarity">
    <text evidence="5">Belongs to the DEAD box helicase family. DDX19/DBP5 subfamily.</text>
</comment>
<feature type="chain" id="PRO_0000256016" description="ATP-dependent RNA helicase DBP5">
    <location>
        <begin position="1"/>
        <end position="471"/>
    </location>
</feature>
<feature type="domain" description="Helicase ATP-binding" evidence="2">
    <location>
        <begin position="97"/>
        <end position="265"/>
    </location>
</feature>
<feature type="domain" description="Helicase C-terminal" evidence="3">
    <location>
        <begin position="276"/>
        <end position="453"/>
    </location>
</feature>
<feature type="region of interest" description="Disordered" evidence="4">
    <location>
        <begin position="1"/>
        <end position="39"/>
    </location>
</feature>
<feature type="short sequence motif" description="Q motif">
    <location>
        <begin position="64"/>
        <end position="92"/>
    </location>
</feature>
<feature type="short sequence motif" description="DEAD box">
    <location>
        <begin position="212"/>
        <end position="215"/>
    </location>
</feature>
<feature type="compositionally biased region" description="Basic and acidic residues" evidence="4">
    <location>
        <begin position="1"/>
        <end position="15"/>
    </location>
</feature>
<feature type="binding site" evidence="2">
    <location>
        <begin position="110"/>
        <end position="117"/>
    </location>
    <ligand>
        <name>ATP</name>
        <dbReference type="ChEBI" id="CHEBI:30616"/>
    </ligand>
</feature>
<dbReference type="EC" id="3.6.4.13"/>
<dbReference type="EMBL" id="CH445341">
    <property type="protein sequence ID" value="EAT81989.1"/>
    <property type="molecule type" value="Genomic_DNA"/>
</dbReference>
<dbReference type="RefSeq" id="XP_001800860.1">
    <property type="nucleotide sequence ID" value="XM_001800808.1"/>
</dbReference>
<dbReference type="SMR" id="Q0UCB9"/>
<dbReference type="FunCoup" id="Q0UCB9">
    <property type="interactions" value="729"/>
</dbReference>
<dbReference type="STRING" id="321614.Q0UCB9"/>
<dbReference type="EnsemblFungi" id="SNOT_10595">
    <property type="protein sequence ID" value="SNOT_10595"/>
    <property type="gene ID" value="SNOG_10595"/>
</dbReference>
<dbReference type="GeneID" id="5977767"/>
<dbReference type="KEGG" id="pno:SNOG_10595"/>
<dbReference type="VEuPathDB" id="FungiDB:JI435_105950"/>
<dbReference type="eggNOG" id="KOG0332">
    <property type="taxonomic scope" value="Eukaryota"/>
</dbReference>
<dbReference type="HOGENOM" id="CLU_003041_1_0_1"/>
<dbReference type="InParanoid" id="Q0UCB9"/>
<dbReference type="OMA" id="IAAETRW"/>
<dbReference type="OrthoDB" id="10265785at2759"/>
<dbReference type="Proteomes" id="UP000001055">
    <property type="component" value="Unassembled WGS sequence"/>
</dbReference>
<dbReference type="GO" id="GO:0005934">
    <property type="term" value="C:cellular bud tip"/>
    <property type="evidence" value="ECO:0007669"/>
    <property type="project" value="EnsemblFungi"/>
</dbReference>
<dbReference type="GO" id="GO:0010494">
    <property type="term" value="C:cytoplasmic stress granule"/>
    <property type="evidence" value="ECO:0000318"/>
    <property type="project" value="GO_Central"/>
</dbReference>
<dbReference type="GO" id="GO:0031965">
    <property type="term" value="C:nuclear membrane"/>
    <property type="evidence" value="ECO:0007669"/>
    <property type="project" value="UniProtKB-SubCell"/>
</dbReference>
<dbReference type="GO" id="GO:0044614">
    <property type="term" value="C:nuclear pore cytoplasmic filaments"/>
    <property type="evidence" value="ECO:0007669"/>
    <property type="project" value="EnsemblFungi"/>
</dbReference>
<dbReference type="GO" id="GO:0005634">
    <property type="term" value="C:nucleus"/>
    <property type="evidence" value="ECO:0000318"/>
    <property type="project" value="GO_Central"/>
</dbReference>
<dbReference type="GO" id="GO:0005524">
    <property type="term" value="F:ATP binding"/>
    <property type="evidence" value="ECO:0007669"/>
    <property type="project" value="UniProtKB-KW"/>
</dbReference>
<dbReference type="GO" id="GO:0016887">
    <property type="term" value="F:ATP hydrolysis activity"/>
    <property type="evidence" value="ECO:0007669"/>
    <property type="project" value="RHEA"/>
</dbReference>
<dbReference type="GO" id="GO:0000822">
    <property type="term" value="F:inositol hexakisphosphate binding"/>
    <property type="evidence" value="ECO:0007669"/>
    <property type="project" value="EnsemblFungi"/>
</dbReference>
<dbReference type="GO" id="GO:0003729">
    <property type="term" value="F:mRNA binding"/>
    <property type="evidence" value="ECO:0000318"/>
    <property type="project" value="GO_Central"/>
</dbReference>
<dbReference type="GO" id="GO:0003724">
    <property type="term" value="F:RNA helicase activity"/>
    <property type="evidence" value="ECO:0000318"/>
    <property type="project" value="GO_Central"/>
</dbReference>
<dbReference type="GO" id="GO:0016973">
    <property type="term" value="P:poly(A)+ mRNA export from nucleus"/>
    <property type="evidence" value="ECO:0000318"/>
    <property type="project" value="GO_Central"/>
</dbReference>
<dbReference type="GO" id="GO:0015031">
    <property type="term" value="P:protein transport"/>
    <property type="evidence" value="ECO:0007669"/>
    <property type="project" value="UniProtKB-KW"/>
</dbReference>
<dbReference type="GO" id="GO:0006415">
    <property type="term" value="P:translational termination"/>
    <property type="evidence" value="ECO:0007669"/>
    <property type="project" value="EnsemblFungi"/>
</dbReference>
<dbReference type="GO" id="GO:0006409">
    <property type="term" value="P:tRNA export from nucleus"/>
    <property type="evidence" value="ECO:0007669"/>
    <property type="project" value="EnsemblFungi"/>
</dbReference>
<dbReference type="CDD" id="cd17963">
    <property type="entry name" value="DEADc_DDX19_DDX25"/>
    <property type="match status" value="1"/>
</dbReference>
<dbReference type="CDD" id="cd18787">
    <property type="entry name" value="SF2_C_DEAD"/>
    <property type="match status" value="1"/>
</dbReference>
<dbReference type="FunFam" id="3.40.50.300:FF:000849">
    <property type="entry name" value="ATP-dependent RNA helicase DBP5"/>
    <property type="match status" value="1"/>
</dbReference>
<dbReference type="Gene3D" id="3.40.50.300">
    <property type="entry name" value="P-loop containing nucleotide triphosphate hydrolases"/>
    <property type="match status" value="2"/>
</dbReference>
<dbReference type="InterPro" id="IPR011545">
    <property type="entry name" value="DEAD/DEAH_box_helicase_dom"/>
</dbReference>
<dbReference type="InterPro" id="IPR014001">
    <property type="entry name" value="Helicase_ATP-bd"/>
</dbReference>
<dbReference type="InterPro" id="IPR001650">
    <property type="entry name" value="Helicase_C-like"/>
</dbReference>
<dbReference type="InterPro" id="IPR027417">
    <property type="entry name" value="P-loop_NTPase"/>
</dbReference>
<dbReference type="InterPro" id="IPR000629">
    <property type="entry name" value="RNA-helicase_DEAD-box_CS"/>
</dbReference>
<dbReference type="InterPro" id="IPR014014">
    <property type="entry name" value="RNA_helicase_DEAD_Q_motif"/>
</dbReference>
<dbReference type="PANTHER" id="PTHR47958">
    <property type="entry name" value="ATP-DEPENDENT RNA HELICASE DBP3"/>
    <property type="match status" value="1"/>
</dbReference>
<dbReference type="Pfam" id="PF00270">
    <property type="entry name" value="DEAD"/>
    <property type="match status" value="1"/>
</dbReference>
<dbReference type="Pfam" id="PF00271">
    <property type="entry name" value="Helicase_C"/>
    <property type="match status" value="1"/>
</dbReference>
<dbReference type="SMART" id="SM00487">
    <property type="entry name" value="DEXDc"/>
    <property type="match status" value="1"/>
</dbReference>
<dbReference type="SMART" id="SM00490">
    <property type="entry name" value="HELICc"/>
    <property type="match status" value="1"/>
</dbReference>
<dbReference type="SUPFAM" id="SSF52540">
    <property type="entry name" value="P-loop containing nucleoside triphosphate hydrolases"/>
    <property type="match status" value="1"/>
</dbReference>
<dbReference type="PROSITE" id="PS00039">
    <property type="entry name" value="DEAD_ATP_HELICASE"/>
    <property type="match status" value="1"/>
</dbReference>
<dbReference type="PROSITE" id="PS51192">
    <property type="entry name" value="HELICASE_ATP_BIND_1"/>
    <property type="match status" value="1"/>
</dbReference>
<dbReference type="PROSITE" id="PS51194">
    <property type="entry name" value="HELICASE_CTER"/>
    <property type="match status" value="1"/>
</dbReference>
<dbReference type="PROSITE" id="PS51195">
    <property type="entry name" value="Q_MOTIF"/>
    <property type="match status" value="1"/>
</dbReference>
<accession>Q0UCB9</accession>
<protein>
    <recommendedName>
        <fullName>ATP-dependent RNA helicase DBP5</fullName>
        <ecNumber>3.6.4.13</ecNumber>
    </recommendedName>
</protein>
<reference key="1">
    <citation type="journal article" date="2007" name="Plant Cell">
        <title>Dothideomycete-plant interactions illuminated by genome sequencing and EST analysis of the wheat pathogen Stagonospora nodorum.</title>
        <authorList>
            <person name="Hane J.K."/>
            <person name="Lowe R.G.T."/>
            <person name="Solomon P.S."/>
            <person name="Tan K.-C."/>
            <person name="Schoch C.L."/>
            <person name="Spatafora J.W."/>
            <person name="Crous P.W."/>
            <person name="Kodira C.D."/>
            <person name="Birren B.W."/>
            <person name="Galagan J.E."/>
            <person name="Torriani S.F.F."/>
            <person name="McDonald B.A."/>
            <person name="Oliver R.P."/>
        </authorList>
    </citation>
    <scope>NUCLEOTIDE SEQUENCE [LARGE SCALE GENOMIC DNA]</scope>
    <source>
        <strain>SN15 / ATCC MYA-4574 / FGSC 10173</strain>
    </source>
</reference>
<name>DBP5_PHANO</name>